<dbReference type="EMBL" id="BA000033">
    <property type="protein sequence ID" value="BAB95033.1"/>
    <property type="molecule type" value="Genomic_DNA"/>
</dbReference>
<dbReference type="RefSeq" id="WP_000368166.1">
    <property type="nucleotide sequence ID" value="NC_003923.1"/>
</dbReference>
<dbReference type="SMR" id="P68846"/>
<dbReference type="KEGG" id="sam:MW1168"/>
<dbReference type="HOGENOM" id="CLU_040469_1_2_9"/>
<dbReference type="GO" id="GO:0005829">
    <property type="term" value="C:cytosol"/>
    <property type="evidence" value="ECO:0007669"/>
    <property type="project" value="TreeGrafter"/>
</dbReference>
<dbReference type="GO" id="GO:0005524">
    <property type="term" value="F:ATP binding"/>
    <property type="evidence" value="ECO:0007669"/>
    <property type="project" value="UniProtKB-UniRule"/>
</dbReference>
<dbReference type="GO" id="GO:0016887">
    <property type="term" value="F:ATP hydrolysis activity"/>
    <property type="evidence" value="ECO:0007669"/>
    <property type="project" value="InterPro"/>
</dbReference>
<dbReference type="GO" id="GO:0140664">
    <property type="term" value="F:ATP-dependent DNA damage sensor activity"/>
    <property type="evidence" value="ECO:0007669"/>
    <property type="project" value="InterPro"/>
</dbReference>
<dbReference type="GO" id="GO:0003684">
    <property type="term" value="F:damaged DNA binding"/>
    <property type="evidence" value="ECO:0007669"/>
    <property type="project" value="UniProtKB-UniRule"/>
</dbReference>
<dbReference type="GO" id="GO:0003697">
    <property type="term" value="F:single-stranded DNA binding"/>
    <property type="evidence" value="ECO:0007669"/>
    <property type="project" value="UniProtKB-UniRule"/>
</dbReference>
<dbReference type="GO" id="GO:0006310">
    <property type="term" value="P:DNA recombination"/>
    <property type="evidence" value="ECO:0007669"/>
    <property type="project" value="UniProtKB-UniRule"/>
</dbReference>
<dbReference type="GO" id="GO:0006281">
    <property type="term" value="P:DNA repair"/>
    <property type="evidence" value="ECO:0007669"/>
    <property type="project" value="UniProtKB-UniRule"/>
</dbReference>
<dbReference type="GO" id="GO:0009432">
    <property type="term" value="P:SOS response"/>
    <property type="evidence" value="ECO:0007669"/>
    <property type="project" value="UniProtKB-UniRule"/>
</dbReference>
<dbReference type="CDD" id="cd00983">
    <property type="entry name" value="RecA"/>
    <property type="match status" value="1"/>
</dbReference>
<dbReference type="FunFam" id="3.40.50.300:FF:000087">
    <property type="entry name" value="Recombinase RecA"/>
    <property type="match status" value="1"/>
</dbReference>
<dbReference type="Gene3D" id="3.40.50.300">
    <property type="entry name" value="P-loop containing nucleotide triphosphate hydrolases"/>
    <property type="match status" value="1"/>
</dbReference>
<dbReference type="HAMAP" id="MF_00268">
    <property type="entry name" value="RecA"/>
    <property type="match status" value="1"/>
</dbReference>
<dbReference type="InterPro" id="IPR003593">
    <property type="entry name" value="AAA+_ATPase"/>
</dbReference>
<dbReference type="InterPro" id="IPR013765">
    <property type="entry name" value="DNA_recomb/repair_RecA"/>
</dbReference>
<dbReference type="InterPro" id="IPR020584">
    <property type="entry name" value="DNA_recomb/repair_RecA_CS"/>
</dbReference>
<dbReference type="InterPro" id="IPR027417">
    <property type="entry name" value="P-loop_NTPase"/>
</dbReference>
<dbReference type="InterPro" id="IPR049261">
    <property type="entry name" value="RecA-like_C"/>
</dbReference>
<dbReference type="InterPro" id="IPR049428">
    <property type="entry name" value="RecA-like_N"/>
</dbReference>
<dbReference type="InterPro" id="IPR020588">
    <property type="entry name" value="RecA_ATP-bd"/>
</dbReference>
<dbReference type="InterPro" id="IPR023400">
    <property type="entry name" value="RecA_C_sf"/>
</dbReference>
<dbReference type="InterPro" id="IPR020587">
    <property type="entry name" value="RecA_monomer-monomer_interface"/>
</dbReference>
<dbReference type="NCBIfam" id="TIGR02012">
    <property type="entry name" value="tigrfam_recA"/>
    <property type="match status" value="1"/>
</dbReference>
<dbReference type="PANTHER" id="PTHR45900:SF1">
    <property type="entry name" value="MITOCHONDRIAL DNA REPAIR PROTEIN RECA HOMOLOG-RELATED"/>
    <property type="match status" value="1"/>
</dbReference>
<dbReference type="PANTHER" id="PTHR45900">
    <property type="entry name" value="RECA"/>
    <property type="match status" value="1"/>
</dbReference>
<dbReference type="Pfam" id="PF00154">
    <property type="entry name" value="RecA"/>
    <property type="match status" value="1"/>
</dbReference>
<dbReference type="Pfam" id="PF21096">
    <property type="entry name" value="RecA_C"/>
    <property type="match status" value="1"/>
</dbReference>
<dbReference type="PRINTS" id="PR00142">
    <property type="entry name" value="RECA"/>
</dbReference>
<dbReference type="SMART" id="SM00382">
    <property type="entry name" value="AAA"/>
    <property type="match status" value="1"/>
</dbReference>
<dbReference type="SUPFAM" id="SSF52540">
    <property type="entry name" value="P-loop containing nucleoside triphosphate hydrolases"/>
    <property type="match status" value="1"/>
</dbReference>
<dbReference type="SUPFAM" id="SSF54752">
    <property type="entry name" value="RecA protein, C-terminal domain"/>
    <property type="match status" value="1"/>
</dbReference>
<dbReference type="PROSITE" id="PS00321">
    <property type="entry name" value="RECA_1"/>
    <property type="match status" value="1"/>
</dbReference>
<dbReference type="PROSITE" id="PS50162">
    <property type="entry name" value="RECA_2"/>
    <property type="match status" value="1"/>
</dbReference>
<dbReference type="PROSITE" id="PS50163">
    <property type="entry name" value="RECA_3"/>
    <property type="match status" value="1"/>
</dbReference>
<feature type="chain" id="PRO_0000122844" description="Protein RecA">
    <location>
        <begin position="1"/>
        <end position="347"/>
    </location>
</feature>
<feature type="region of interest" description="Disordered" evidence="2">
    <location>
        <begin position="325"/>
        <end position="347"/>
    </location>
</feature>
<feature type="compositionally biased region" description="Basic and acidic residues" evidence="2">
    <location>
        <begin position="338"/>
        <end position="347"/>
    </location>
</feature>
<feature type="binding site" evidence="1">
    <location>
        <begin position="65"/>
        <end position="72"/>
    </location>
    <ligand>
        <name>ATP</name>
        <dbReference type="ChEBI" id="CHEBI:30616"/>
    </ligand>
</feature>
<organism>
    <name type="scientific">Staphylococcus aureus (strain MW2)</name>
    <dbReference type="NCBI Taxonomy" id="196620"/>
    <lineage>
        <taxon>Bacteria</taxon>
        <taxon>Bacillati</taxon>
        <taxon>Bacillota</taxon>
        <taxon>Bacilli</taxon>
        <taxon>Bacillales</taxon>
        <taxon>Staphylococcaceae</taxon>
        <taxon>Staphylococcus</taxon>
    </lineage>
</organism>
<name>RECA_STAAW</name>
<proteinExistence type="inferred from homology"/>
<evidence type="ECO:0000255" key="1">
    <source>
        <dbReference type="HAMAP-Rule" id="MF_00268"/>
    </source>
</evidence>
<evidence type="ECO:0000256" key="2">
    <source>
        <dbReference type="SAM" id="MobiDB-lite"/>
    </source>
</evidence>
<gene>
    <name evidence="1" type="primary">recA</name>
    <name type="ordered locus">MW1168</name>
</gene>
<keyword id="KW-0067">ATP-binding</keyword>
<keyword id="KW-0963">Cytoplasm</keyword>
<keyword id="KW-0227">DNA damage</keyword>
<keyword id="KW-0233">DNA recombination</keyword>
<keyword id="KW-0234">DNA repair</keyword>
<keyword id="KW-0238">DNA-binding</keyword>
<keyword id="KW-0547">Nucleotide-binding</keyword>
<keyword id="KW-0742">SOS response</keyword>
<reference key="1">
    <citation type="journal article" date="2002" name="Lancet">
        <title>Genome and virulence determinants of high virulence community-acquired MRSA.</title>
        <authorList>
            <person name="Baba T."/>
            <person name="Takeuchi F."/>
            <person name="Kuroda M."/>
            <person name="Yuzawa H."/>
            <person name="Aoki K."/>
            <person name="Oguchi A."/>
            <person name="Nagai Y."/>
            <person name="Iwama N."/>
            <person name="Asano K."/>
            <person name="Naimi T."/>
            <person name="Kuroda H."/>
            <person name="Cui L."/>
            <person name="Yamamoto K."/>
            <person name="Hiramatsu K."/>
        </authorList>
    </citation>
    <scope>NUCLEOTIDE SEQUENCE [LARGE SCALE GENOMIC DNA]</scope>
    <source>
        <strain>MW2</strain>
    </source>
</reference>
<protein>
    <recommendedName>
        <fullName evidence="1">Protein RecA</fullName>
    </recommendedName>
    <alternativeName>
        <fullName evidence="1">Recombinase A</fullName>
    </alternativeName>
</protein>
<sequence>MDNDRQKALDTVIKNMEKSFGKGAVMKLGDNIGRRVSTTSTGSVTLDNALGVGGYPKGRIIEIYGPESSGKTTVALHAIAEVQSNGGVAAFIDAEHALDPEYAQALGVDIDNLYLSQPDHGEQGLEIAEAFVRSGAVDIVVVDSVAALTPKAEIEGEMGDTHVGLQARLMSQALRKLSGAISKSNTTAIFINQIREKVGVMFGNPETTPGGRALKFYSSVRLEVRRAEQLKQGQEIVGNRTKIKVVKNKVAPPFRVAEVDIMYGQGISKEGELIDLGVENDIVDKSGAWYSYNGERMGQGKENVKMYLKENPQIKEEIDRKLREKLGISDGDVEETEDAPKSLFDEE</sequence>
<accession>P68846</accession>
<accession>Q02350</accession>
<comment type="function">
    <text evidence="1">Can catalyze the hydrolysis of ATP in the presence of single-stranded DNA, the ATP-dependent uptake of single-stranded DNA by duplex DNA, and the ATP-dependent hybridization of homologous single-stranded DNAs. It interacts with LexA causing its activation and leading to its autocatalytic cleavage.</text>
</comment>
<comment type="subcellular location">
    <subcellularLocation>
        <location evidence="1">Cytoplasm</location>
    </subcellularLocation>
</comment>
<comment type="similarity">
    <text evidence="1">Belongs to the RecA family.</text>
</comment>